<name>RL28_SALG2</name>
<comment type="similarity">
    <text evidence="1">Belongs to the bacterial ribosomal protein bL28 family.</text>
</comment>
<keyword id="KW-0687">Ribonucleoprotein</keyword>
<keyword id="KW-0689">Ribosomal protein</keyword>
<protein>
    <recommendedName>
        <fullName evidence="1">Large ribosomal subunit protein bL28</fullName>
    </recommendedName>
    <alternativeName>
        <fullName evidence="2">50S ribosomal protein L28</fullName>
    </alternativeName>
</protein>
<accession>B5RGF0</accession>
<feature type="chain" id="PRO_1000121683" description="Large ribosomal subunit protein bL28">
    <location>
        <begin position="1"/>
        <end position="78"/>
    </location>
</feature>
<gene>
    <name evidence="1" type="primary">rpmB</name>
    <name type="ordered locus">SG3703</name>
</gene>
<proteinExistence type="inferred from homology"/>
<sequence length="78" mass="9051">MSRVCQVTGKRPVTGNNRSHALNATKRRFLPNLHSHRFWVESEKRFVTLRVSAKGMRIIDKKGIETVLSELRARGEKY</sequence>
<evidence type="ECO:0000255" key="1">
    <source>
        <dbReference type="HAMAP-Rule" id="MF_00373"/>
    </source>
</evidence>
<evidence type="ECO:0000305" key="2"/>
<reference key="1">
    <citation type="journal article" date="2008" name="Genome Res.">
        <title>Comparative genome analysis of Salmonella enteritidis PT4 and Salmonella gallinarum 287/91 provides insights into evolutionary and host adaptation pathways.</title>
        <authorList>
            <person name="Thomson N.R."/>
            <person name="Clayton D.J."/>
            <person name="Windhorst D."/>
            <person name="Vernikos G."/>
            <person name="Davidson S."/>
            <person name="Churcher C."/>
            <person name="Quail M.A."/>
            <person name="Stevens M."/>
            <person name="Jones M.A."/>
            <person name="Watson M."/>
            <person name="Barron A."/>
            <person name="Layton A."/>
            <person name="Pickard D."/>
            <person name="Kingsley R.A."/>
            <person name="Bignell A."/>
            <person name="Clark L."/>
            <person name="Harris B."/>
            <person name="Ormond D."/>
            <person name="Abdellah Z."/>
            <person name="Brooks K."/>
            <person name="Cherevach I."/>
            <person name="Chillingworth T."/>
            <person name="Woodward J."/>
            <person name="Norberczak H."/>
            <person name="Lord A."/>
            <person name="Arrowsmith C."/>
            <person name="Jagels K."/>
            <person name="Moule S."/>
            <person name="Mungall K."/>
            <person name="Saunders M."/>
            <person name="Whitehead S."/>
            <person name="Chabalgoity J.A."/>
            <person name="Maskell D."/>
            <person name="Humphreys T."/>
            <person name="Roberts M."/>
            <person name="Barrow P.A."/>
            <person name="Dougan G."/>
            <person name="Parkhill J."/>
        </authorList>
    </citation>
    <scope>NUCLEOTIDE SEQUENCE [LARGE SCALE GENOMIC DNA]</scope>
    <source>
        <strain>287/91 / NCTC 13346</strain>
    </source>
</reference>
<organism>
    <name type="scientific">Salmonella gallinarum (strain 287/91 / NCTC 13346)</name>
    <dbReference type="NCBI Taxonomy" id="550538"/>
    <lineage>
        <taxon>Bacteria</taxon>
        <taxon>Pseudomonadati</taxon>
        <taxon>Pseudomonadota</taxon>
        <taxon>Gammaproteobacteria</taxon>
        <taxon>Enterobacterales</taxon>
        <taxon>Enterobacteriaceae</taxon>
        <taxon>Salmonella</taxon>
    </lineage>
</organism>
<dbReference type="EMBL" id="AM933173">
    <property type="protein sequence ID" value="CAR39483.1"/>
    <property type="molecule type" value="Genomic_DNA"/>
</dbReference>
<dbReference type="RefSeq" id="WP_001519051.1">
    <property type="nucleotide sequence ID" value="NC_011274.1"/>
</dbReference>
<dbReference type="SMR" id="B5RGF0"/>
<dbReference type="KEGG" id="seg:SG3703"/>
<dbReference type="HOGENOM" id="CLU_064548_3_1_6"/>
<dbReference type="Proteomes" id="UP000008321">
    <property type="component" value="Chromosome"/>
</dbReference>
<dbReference type="GO" id="GO:0022625">
    <property type="term" value="C:cytosolic large ribosomal subunit"/>
    <property type="evidence" value="ECO:0007669"/>
    <property type="project" value="TreeGrafter"/>
</dbReference>
<dbReference type="GO" id="GO:0003735">
    <property type="term" value="F:structural constituent of ribosome"/>
    <property type="evidence" value="ECO:0007669"/>
    <property type="project" value="InterPro"/>
</dbReference>
<dbReference type="GO" id="GO:0006412">
    <property type="term" value="P:translation"/>
    <property type="evidence" value="ECO:0007669"/>
    <property type="project" value="UniProtKB-UniRule"/>
</dbReference>
<dbReference type="FunFam" id="2.30.170.40:FF:000001">
    <property type="entry name" value="50S ribosomal protein L28"/>
    <property type="match status" value="1"/>
</dbReference>
<dbReference type="Gene3D" id="2.30.170.40">
    <property type="entry name" value="Ribosomal protein L28/L24"/>
    <property type="match status" value="1"/>
</dbReference>
<dbReference type="HAMAP" id="MF_00373">
    <property type="entry name" value="Ribosomal_bL28"/>
    <property type="match status" value="1"/>
</dbReference>
<dbReference type="InterPro" id="IPR026569">
    <property type="entry name" value="Ribosomal_bL28"/>
</dbReference>
<dbReference type="InterPro" id="IPR034704">
    <property type="entry name" value="Ribosomal_bL28/bL31-like_sf"/>
</dbReference>
<dbReference type="InterPro" id="IPR001383">
    <property type="entry name" value="Ribosomal_bL28_bact-type"/>
</dbReference>
<dbReference type="InterPro" id="IPR037147">
    <property type="entry name" value="Ribosomal_bL28_sf"/>
</dbReference>
<dbReference type="NCBIfam" id="TIGR00009">
    <property type="entry name" value="L28"/>
    <property type="match status" value="1"/>
</dbReference>
<dbReference type="PANTHER" id="PTHR13528">
    <property type="entry name" value="39S RIBOSOMAL PROTEIN L28, MITOCHONDRIAL"/>
    <property type="match status" value="1"/>
</dbReference>
<dbReference type="PANTHER" id="PTHR13528:SF2">
    <property type="entry name" value="LARGE RIBOSOMAL SUBUNIT PROTEIN BL28M"/>
    <property type="match status" value="1"/>
</dbReference>
<dbReference type="Pfam" id="PF00830">
    <property type="entry name" value="Ribosomal_L28"/>
    <property type="match status" value="1"/>
</dbReference>
<dbReference type="SUPFAM" id="SSF143800">
    <property type="entry name" value="L28p-like"/>
    <property type="match status" value="1"/>
</dbReference>